<reference key="1">
    <citation type="submission" date="2007-10" db="EMBL/GenBank/DDBJ databases">
        <title>Complete sequence of Caldivirga maquilingensis IC-167.</title>
        <authorList>
            <consortium name="US DOE Joint Genome Institute"/>
            <person name="Copeland A."/>
            <person name="Lucas S."/>
            <person name="Lapidus A."/>
            <person name="Barry K."/>
            <person name="Glavina del Rio T."/>
            <person name="Dalin E."/>
            <person name="Tice H."/>
            <person name="Pitluck S."/>
            <person name="Saunders E."/>
            <person name="Brettin T."/>
            <person name="Bruce D."/>
            <person name="Detter J.C."/>
            <person name="Han C."/>
            <person name="Schmutz J."/>
            <person name="Larimer F."/>
            <person name="Land M."/>
            <person name="Hauser L."/>
            <person name="Kyrpides N."/>
            <person name="Ivanova N."/>
            <person name="Biddle J.F."/>
            <person name="Zhang Z."/>
            <person name="Fitz-Gibbon S.T."/>
            <person name="Lowe T.M."/>
            <person name="Saltikov C."/>
            <person name="House C.H."/>
            <person name="Richardson P."/>
        </authorList>
    </citation>
    <scope>NUCLEOTIDE SEQUENCE [LARGE SCALE GENOMIC DNA]</scope>
    <source>
        <strain>ATCC 700844 / DSM 13496 / JCM 10307 / IC-167</strain>
    </source>
</reference>
<gene>
    <name evidence="1" type="primary">rps27ae</name>
    <name type="ordered locus">Cmaq_0594</name>
</gene>
<organism>
    <name type="scientific">Caldivirga maquilingensis (strain ATCC 700844 / DSM 13496 / JCM 10307 / IC-167)</name>
    <dbReference type="NCBI Taxonomy" id="397948"/>
    <lineage>
        <taxon>Archaea</taxon>
        <taxon>Thermoproteota</taxon>
        <taxon>Thermoprotei</taxon>
        <taxon>Thermoproteales</taxon>
        <taxon>Thermoproteaceae</taxon>
        <taxon>Caldivirga</taxon>
    </lineage>
</organism>
<keyword id="KW-0479">Metal-binding</keyword>
<keyword id="KW-1185">Reference proteome</keyword>
<keyword id="KW-0687">Ribonucleoprotein</keyword>
<keyword id="KW-0689">Ribosomal protein</keyword>
<keyword id="KW-0862">Zinc</keyword>
<keyword id="KW-0863">Zinc-finger</keyword>
<dbReference type="EMBL" id="CP000852">
    <property type="protein sequence ID" value="ABW01435.1"/>
    <property type="molecule type" value="Genomic_DNA"/>
</dbReference>
<dbReference type="RefSeq" id="WP_012185655.1">
    <property type="nucleotide sequence ID" value="NC_009954.1"/>
</dbReference>
<dbReference type="SMR" id="A8MCC9"/>
<dbReference type="STRING" id="397948.Cmaq_0594"/>
<dbReference type="GeneID" id="5709353"/>
<dbReference type="KEGG" id="cma:Cmaq_0594"/>
<dbReference type="eggNOG" id="arCOG04183">
    <property type="taxonomic scope" value="Archaea"/>
</dbReference>
<dbReference type="HOGENOM" id="CLU_179743_1_0_2"/>
<dbReference type="OrthoDB" id="25142at2157"/>
<dbReference type="Proteomes" id="UP000001137">
    <property type="component" value="Chromosome"/>
</dbReference>
<dbReference type="GO" id="GO:1990904">
    <property type="term" value="C:ribonucleoprotein complex"/>
    <property type="evidence" value="ECO:0007669"/>
    <property type="project" value="UniProtKB-KW"/>
</dbReference>
<dbReference type="GO" id="GO:0005840">
    <property type="term" value="C:ribosome"/>
    <property type="evidence" value="ECO:0007669"/>
    <property type="project" value="UniProtKB-KW"/>
</dbReference>
<dbReference type="GO" id="GO:0003735">
    <property type="term" value="F:structural constituent of ribosome"/>
    <property type="evidence" value="ECO:0007669"/>
    <property type="project" value="InterPro"/>
</dbReference>
<dbReference type="GO" id="GO:0008270">
    <property type="term" value="F:zinc ion binding"/>
    <property type="evidence" value="ECO:0007669"/>
    <property type="project" value="UniProtKB-UniRule"/>
</dbReference>
<dbReference type="GO" id="GO:0006412">
    <property type="term" value="P:translation"/>
    <property type="evidence" value="ECO:0007669"/>
    <property type="project" value="UniProtKB-UniRule"/>
</dbReference>
<dbReference type="Gene3D" id="6.20.50.180">
    <property type="match status" value="1"/>
</dbReference>
<dbReference type="HAMAP" id="MF_00777">
    <property type="entry name" value="Ribosomal_eS31"/>
    <property type="match status" value="1"/>
</dbReference>
<dbReference type="InterPro" id="IPR002906">
    <property type="entry name" value="Ribosomal_eS31"/>
</dbReference>
<dbReference type="InterPro" id="IPR022845">
    <property type="entry name" value="Ribosomal_eS31_arc"/>
</dbReference>
<dbReference type="InterPro" id="IPR011332">
    <property type="entry name" value="Ribosomal_zn-bd"/>
</dbReference>
<dbReference type="NCBIfam" id="NF001669">
    <property type="entry name" value="PRK00432.1"/>
    <property type="match status" value="1"/>
</dbReference>
<dbReference type="Pfam" id="PF01599">
    <property type="entry name" value="Ribosomal_S27"/>
    <property type="match status" value="1"/>
</dbReference>
<dbReference type="SMART" id="SM01402">
    <property type="entry name" value="Ribosomal_S27"/>
    <property type="match status" value="1"/>
</dbReference>
<dbReference type="SUPFAM" id="SSF57829">
    <property type="entry name" value="Zn-binding ribosomal proteins"/>
    <property type="match status" value="1"/>
</dbReference>
<evidence type="ECO:0000255" key="1">
    <source>
        <dbReference type="HAMAP-Rule" id="MF_00777"/>
    </source>
</evidence>
<evidence type="ECO:0000305" key="2"/>
<name>RS27A_CALMQ</name>
<comment type="cofactor">
    <cofactor evidence="1">
        <name>Zn(2+)</name>
        <dbReference type="ChEBI" id="CHEBI:29105"/>
    </cofactor>
    <text evidence="1">Binds 1 zinc ion per subunit.</text>
</comment>
<comment type="subunit">
    <text evidence="1">Part of the 30S ribosomal subunit.</text>
</comment>
<comment type="similarity">
    <text evidence="1">Belongs to the eukaryotic ribosomal protein eS31 family.</text>
</comment>
<feature type="chain" id="PRO_1000083579" description="Small ribosomal subunit protein eS31">
    <location>
        <begin position="1"/>
        <end position="72"/>
    </location>
</feature>
<feature type="zinc finger region" description="C4-type" evidence="1">
    <location>
        <begin position="32"/>
        <end position="54"/>
    </location>
</feature>
<feature type="binding site" evidence="1">
    <location>
        <position position="32"/>
    </location>
    <ligand>
        <name>Zn(2+)</name>
        <dbReference type="ChEBI" id="CHEBI:29105"/>
    </ligand>
</feature>
<feature type="binding site" evidence="1">
    <location>
        <position position="35"/>
    </location>
    <ligand>
        <name>Zn(2+)</name>
        <dbReference type="ChEBI" id="CHEBI:29105"/>
    </ligand>
</feature>
<feature type="binding site" evidence="1">
    <location>
        <position position="51"/>
    </location>
    <ligand>
        <name>Zn(2+)</name>
        <dbReference type="ChEBI" id="CHEBI:29105"/>
    </ligand>
</feature>
<feature type="binding site" evidence="1">
    <location>
        <position position="54"/>
    </location>
    <ligand>
        <name>Zn(2+)</name>
        <dbReference type="ChEBI" id="CHEBI:29105"/>
    </ligand>
</feature>
<proteinExistence type="inferred from homology"/>
<protein>
    <recommendedName>
        <fullName evidence="1">Small ribosomal subunit protein eS31</fullName>
    </recommendedName>
    <alternativeName>
        <fullName evidence="2">30S ribosomal protein S27ae</fullName>
    </alternativeName>
</protein>
<sequence length="72" mass="8432">MLSMSKAVKARAHTWYTIDMEKGVFRFNKRLCPRCGSVMAYHKEPVPRWHCGKCGYTIFESQAPRQRPSRGR</sequence>
<accession>A8MCC9</accession>